<organism>
    <name type="scientific">Yersinia pestis bv. Antiqua (strain Nepal516)</name>
    <dbReference type="NCBI Taxonomy" id="377628"/>
    <lineage>
        <taxon>Bacteria</taxon>
        <taxon>Pseudomonadati</taxon>
        <taxon>Pseudomonadota</taxon>
        <taxon>Gammaproteobacteria</taxon>
        <taxon>Enterobacterales</taxon>
        <taxon>Yersiniaceae</taxon>
        <taxon>Yersinia</taxon>
    </lineage>
</organism>
<feature type="chain" id="PRO_1000014322" description="Small ribosomal subunit protein uS7">
    <location>
        <begin position="1"/>
        <end position="156"/>
    </location>
</feature>
<accession>Q1CCT7</accession>
<accession>D1Q2M8</accession>
<name>RS7_YERPN</name>
<evidence type="ECO:0000255" key="1">
    <source>
        <dbReference type="HAMAP-Rule" id="MF_00480"/>
    </source>
</evidence>
<evidence type="ECO:0000305" key="2"/>
<dbReference type="EMBL" id="CP000305">
    <property type="protein sequence ID" value="ABG20193.1"/>
    <property type="molecule type" value="Genomic_DNA"/>
</dbReference>
<dbReference type="EMBL" id="ACNQ01000019">
    <property type="protein sequence ID" value="EEO74781.1"/>
    <property type="molecule type" value="Genomic_DNA"/>
</dbReference>
<dbReference type="RefSeq" id="WP_002212324.1">
    <property type="nucleotide sequence ID" value="NZ_ACNQ01000019.1"/>
</dbReference>
<dbReference type="SMR" id="Q1CCT7"/>
<dbReference type="GeneID" id="97454225"/>
<dbReference type="KEGG" id="ypn:YPN_3866"/>
<dbReference type="HOGENOM" id="CLU_072226_1_1_6"/>
<dbReference type="Proteomes" id="UP000008936">
    <property type="component" value="Chromosome"/>
</dbReference>
<dbReference type="GO" id="GO:0015935">
    <property type="term" value="C:small ribosomal subunit"/>
    <property type="evidence" value="ECO:0007669"/>
    <property type="project" value="InterPro"/>
</dbReference>
<dbReference type="GO" id="GO:0019843">
    <property type="term" value="F:rRNA binding"/>
    <property type="evidence" value="ECO:0007669"/>
    <property type="project" value="UniProtKB-UniRule"/>
</dbReference>
<dbReference type="GO" id="GO:0003735">
    <property type="term" value="F:structural constituent of ribosome"/>
    <property type="evidence" value="ECO:0007669"/>
    <property type="project" value="InterPro"/>
</dbReference>
<dbReference type="GO" id="GO:0000049">
    <property type="term" value="F:tRNA binding"/>
    <property type="evidence" value="ECO:0007669"/>
    <property type="project" value="UniProtKB-UniRule"/>
</dbReference>
<dbReference type="GO" id="GO:0006412">
    <property type="term" value="P:translation"/>
    <property type="evidence" value="ECO:0007669"/>
    <property type="project" value="UniProtKB-UniRule"/>
</dbReference>
<dbReference type="CDD" id="cd14869">
    <property type="entry name" value="uS7_Bacteria"/>
    <property type="match status" value="1"/>
</dbReference>
<dbReference type="FunFam" id="1.10.455.10:FF:000001">
    <property type="entry name" value="30S ribosomal protein S7"/>
    <property type="match status" value="1"/>
</dbReference>
<dbReference type="Gene3D" id="1.10.455.10">
    <property type="entry name" value="Ribosomal protein S7 domain"/>
    <property type="match status" value="1"/>
</dbReference>
<dbReference type="HAMAP" id="MF_00480_B">
    <property type="entry name" value="Ribosomal_uS7_B"/>
    <property type="match status" value="1"/>
</dbReference>
<dbReference type="InterPro" id="IPR000235">
    <property type="entry name" value="Ribosomal_uS7"/>
</dbReference>
<dbReference type="InterPro" id="IPR005717">
    <property type="entry name" value="Ribosomal_uS7_bac/org-type"/>
</dbReference>
<dbReference type="InterPro" id="IPR020606">
    <property type="entry name" value="Ribosomal_uS7_CS"/>
</dbReference>
<dbReference type="InterPro" id="IPR023798">
    <property type="entry name" value="Ribosomal_uS7_dom"/>
</dbReference>
<dbReference type="InterPro" id="IPR036823">
    <property type="entry name" value="Ribosomal_uS7_dom_sf"/>
</dbReference>
<dbReference type="NCBIfam" id="TIGR01029">
    <property type="entry name" value="rpsG_bact"/>
    <property type="match status" value="1"/>
</dbReference>
<dbReference type="PANTHER" id="PTHR11205">
    <property type="entry name" value="RIBOSOMAL PROTEIN S7"/>
    <property type="match status" value="1"/>
</dbReference>
<dbReference type="Pfam" id="PF00177">
    <property type="entry name" value="Ribosomal_S7"/>
    <property type="match status" value="1"/>
</dbReference>
<dbReference type="PIRSF" id="PIRSF002122">
    <property type="entry name" value="RPS7p_RPS7a_RPS5e_RPS7o"/>
    <property type="match status" value="1"/>
</dbReference>
<dbReference type="SUPFAM" id="SSF47973">
    <property type="entry name" value="Ribosomal protein S7"/>
    <property type="match status" value="1"/>
</dbReference>
<dbReference type="PROSITE" id="PS00052">
    <property type="entry name" value="RIBOSOMAL_S7"/>
    <property type="match status" value="1"/>
</dbReference>
<proteinExistence type="inferred from homology"/>
<comment type="function">
    <text evidence="1">One of the primary rRNA binding proteins, it binds directly to 16S rRNA where it nucleates assembly of the head domain of the 30S subunit. Is located at the subunit interface close to the decoding center, probably blocks exit of the E-site tRNA.</text>
</comment>
<comment type="subunit">
    <text evidence="1">Part of the 30S ribosomal subunit. Contacts proteins S9 and S11.</text>
</comment>
<comment type="similarity">
    <text evidence="1">Belongs to the universal ribosomal protein uS7 family.</text>
</comment>
<reference key="1">
    <citation type="journal article" date="2006" name="J. Bacteriol.">
        <title>Complete genome sequence of Yersinia pestis strains Antiqua and Nepal516: evidence of gene reduction in an emerging pathogen.</title>
        <authorList>
            <person name="Chain P.S.G."/>
            <person name="Hu P."/>
            <person name="Malfatti S.A."/>
            <person name="Radnedge L."/>
            <person name="Larimer F."/>
            <person name="Vergez L.M."/>
            <person name="Worsham P."/>
            <person name="Chu M.C."/>
            <person name="Andersen G.L."/>
        </authorList>
    </citation>
    <scope>NUCLEOTIDE SEQUENCE [LARGE SCALE GENOMIC DNA]</scope>
    <source>
        <strain>Nepal516</strain>
    </source>
</reference>
<reference key="2">
    <citation type="submission" date="2009-04" db="EMBL/GenBank/DDBJ databases">
        <title>Yersinia pestis Nepal516A whole genome shotgun sequencing project.</title>
        <authorList>
            <person name="Plunkett G. III"/>
            <person name="Anderson B.D."/>
            <person name="Baumler D.J."/>
            <person name="Burland V."/>
            <person name="Cabot E.L."/>
            <person name="Glasner J.D."/>
            <person name="Mau B."/>
            <person name="Neeno-Eckwall E."/>
            <person name="Perna N.T."/>
            <person name="Munk A.C."/>
            <person name="Tapia R."/>
            <person name="Green L.D."/>
            <person name="Rogers Y.C."/>
            <person name="Detter J.C."/>
            <person name="Bruce D.C."/>
            <person name="Brettin T.S."/>
        </authorList>
    </citation>
    <scope>NUCLEOTIDE SEQUENCE [LARGE SCALE GENOMIC DNA]</scope>
    <source>
        <strain>Nepal516</strain>
    </source>
</reference>
<gene>
    <name evidence="1" type="primary">rpsG</name>
    <name type="ordered locus">YPN_3866</name>
    <name type="ORF">YP516_4391</name>
</gene>
<keyword id="KW-0687">Ribonucleoprotein</keyword>
<keyword id="KW-0689">Ribosomal protein</keyword>
<keyword id="KW-0694">RNA-binding</keyword>
<keyword id="KW-0699">rRNA-binding</keyword>
<keyword id="KW-0820">tRNA-binding</keyword>
<sequence>MPRRRVIGQRKILPDPKFGSELLAKFVNILMVDGKKSTAEAIVYTALETLAQRSGKDFLEAFEVALDNVRPTVEVKSRRVGGSTYQVPVEVRPVRRNALAMRWIVDAARKRGDKSMALRLANELSDAAENKGSAVKKREDVHRMAEANKAFAHYRW</sequence>
<protein>
    <recommendedName>
        <fullName evidence="1">Small ribosomal subunit protein uS7</fullName>
    </recommendedName>
    <alternativeName>
        <fullName evidence="2">30S ribosomal protein S7</fullName>
    </alternativeName>
</protein>